<reference key="1">
    <citation type="journal article" date="2005" name="Nature">
        <title>Initial sequence of the chimpanzee genome and comparison with the human genome.</title>
        <authorList>
            <consortium name="Chimpanzee sequencing and analysis consortium"/>
        </authorList>
    </citation>
    <scope>NUCLEOTIDE SEQUENCE [LARGE SCALE GENOMIC DNA]</scope>
</reference>
<reference key="2">
    <citation type="journal article" date="2010" name="Comp. Biochem. Physiol.">
        <title>Detection of two distinct forms of apoC-I in great apes.</title>
        <authorList>
            <person name="Puppione D.L."/>
            <person name="Ryan C.M."/>
            <person name="Bassilian S."/>
            <person name="Souda P."/>
            <person name="Xiao X."/>
            <person name="Ryder O.A."/>
            <person name="Whitelegge J.P."/>
        </authorList>
    </citation>
    <scope>IDENTIFICATION</scope>
    <scope>MASS SPECTROMETRY</scope>
</reference>
<reference key="3">
    <citation type="journal article" date="2013" name="Front. Biol.">
        <title>Proteogenomic Review of the Changes in Primate apoC-I during Evolution.</title>
        <authorList>
            <person name="Puppione D."/>
            <person name="Whitelegge J.P."/>
        </authorList>
    </citation>
    <scope>REVIEW</scope>
</reference>
<reference key="4">
    <citation type="journal article" date="2014" name="Comp. Biochem. Physiol.">
        <title>Higher primates, but not New World monkeys, have a duplicate set of enhancers flanking their apoC-I genes.</title>
        <authorList>
            <person name="Puppione D.L."/>
        </authorList>
    </citation>
    <scope>GENE DUPLICATION</scope>
</reference>
<protein>
    <recommendedName>
        <fullName>Apolipoprotein C-I, acidic form</fullName>
        <shortName>Apo-CIA</shortName>
        <shortName>ApoC-IA</shortName>
    </recommendedName>
    <alternativeName>
        <fullName>Apolipoprotein C1A</fullName>
    </alternativeName>
    <component>
        <recommendedName>
            <fullName>Truncated apolipoprotein C-I, acidic form</fullName>
            <shortName>Apo-CIA'</shortName>
            <shortName>ApoC-IA'</shortName>
        </recommendedName>
    </component>
</protein>
<dbReference type="RefSeq" id="XP_024207225.2">
    <property type="nucleotide sequence ID" value="XM_024351457.3"/>
</dbReference>
<dbReference type="SMR" id="P0CE37"/>
<dbReference type="STRING" id="9598.ENSPTRP00000060923"/>
<dbReference type="PaxDb" id="9598-ENSPTRP00000060923"/>
<dbReference type="GeneID" id="743907"/>
<dbReference type="eggNOG" id="ENOG502SEU4">
    <property type="taxonomic scope" value="Eukaryota"/>
</dbReference>
<dbReference type="HOGENOM" id="CLU_160094_1_0_1"/>
<dbReference type="InParanoid" id="P0CE37"/>
<dbReference type="TreeFam" id="TF330940"/>
<dbReference type="Proteomes" id="UP000002277">
    <property type="component" value="Unplaced"/>
</dbReference>
<dbReference type="GO" id="GO:0034364">
    <property type="term" value="C:high-density lipoprotein particle"/>
    <property type="evidence" value="ECO:0000318"/>
    <property type="project" value="GO_Central"/>
</dbReference>
<dbReference type="GO" id="GO:0034361">
    <property type="term" value="C:very-low-density lipoprotein particle"/>
    <property type="evidence" value="ECO:0000318"/>
    <property type="project" value="GO_Central"/>
</dbReference>
<dbReference type="GO" id="GO:0005504">
    <property type="term" value="F:fatty acid binding"/>
    <property type="evidence" value="ECO:0000318"/>
    <property type="project" value="GO_Central"/>
</dbReference>
<dbReference type="GO" id="GO:0004859">
    <property type="term" value="F:phospholipase inhibitor activity"/>
    <property type="evidence" value="ECO:0000318"/>
    <property type="project" value="GO_Central"/>
</dbReference>
<dbReference type="GO" id="GO:0006869">
    <property type="term" value="P:lipid transport"/>
    <property type="evidence" value="ECO:0007669"/>
    <property type="project" value="UniProtKB-KW"/>
</dbReference>
<dbReference type="GO" id="GO:0042157">
    <property type="term" value="P:lipoprotein metabolic process"/>
    <property type="evidence" value="ECO:0007669"/>
    <property type="project" value="InterPro"/>
</dbReference>
<dbReference type="GO" id="GO:0032375">
    <property type="term" value="P:negative regulation of cholesterol transport"/>
    <property type="evidence" value="ECO:0000318"/>
    <property type="project" value="GO_Central"/>
</dbReference>
<dbReference type="GO" id="GO:0050995">
    <property type="term" value="P:negative regulation of lipid catabolic process"/>
    <property type="evidence" value="ECO:0000318"/>
    <property type="project" value="GO_Central"/>
</dbReference>
<dbReference type="GO" id="GO:0010916">
    <property type="term" value="P:negative regulation of very-low-density lipoprotein particle clearance"/>
    <property type="evidence" value="ECO:0000318"/>
    <property type="project" value="GO_Central"/>
</dbReference>
<dbReference type="GO" id="GO:0006641">
    <property type="term" value="P:triglyceride metabolic process"/>
    <property type="evidence" value="ECO:0000318"/>
    <property type="project" value="GO_Central"/>
</dbReference>
<dbReference type="GO" id="GO:0034447">
    <property type="term" value="P:very-low-density lipoprotein particle clearance"/>
    <property type="evidence" value="ECO:0000318"/>
    <property type="project" value="GO_Central"/>
</dbReference>
<dbReference type="Gene3D" id="4.10.260.30">
    <property type="entry name" value="Apolipoprotein C-I"/>
    <property type="match status" value="1"/>
</dbReference>
<dbReference type="InterPro" id="IPR043081">
    <property type="entry name" value="ApoC-1_sf"/>
</dbReference>
<dbReference type="InterPro" id="IPR006781">
    <property type="entry name" value="ApoC-I"/>
</dbReference>
<dbReference type="PANTHER" id="PTHR16565">
    <property type="entry name" value="APOLIPOPROTEIN C-I"/>
    <property type="match status" value="1"/>
</dbReference>
<dbReference type="PANTHER" id="PTHR16565:SF3">
    <property type="entry name" value="APOLIPOPROTEIN C-I, ACIDIC FORM"/>
    <property type="match status" value="1"/>
</dbReference>
<dbReference type="Pfam" id="PF04691">
    <property type="entry name" value="ApoC-I"/>
    <property type="match status" value="1"/>
</dbReference>
<proteinExistence type="evidence at protein level"/>
<feature type="signal peptide" evidence="3">
    <location>
        <begin position="1"/>
        <end position="26"/>
    </location>
</feature>
<feature type="chain" id="PRO_0000391834" description="Apolipoprotein C-I, acidic form">
    <location>
        <begin position="27"/>
        <end position="83"/>
    </location>
</feature>
<feature type="chain" id="PRO_0000391835" description="Truncated apolipoprotein C-I, acidic form" evidence="2">
    <location>
        <begin position="29"/>
        <end position="83"/>
    </location>
</feature>
<keyword id="KW-0445">Lipid transport</keyword>
<keyword id="KW-1185">Reference proteome</keyword>
<keyword id="KW-0964">Secreted</keyword>
<keyword id="KW-0732">Signal</keyword>
<keyword id="KW-0813">Transport</keyword>
<organism>
    <name type="scientific">Pan troglodytes</name>
    <name type="common">Chimpanzee</name>
    <dbReference type="NCBI Taxonomy" id="9598"/>
    <lineage>
        <taxon>Eukaryota</taxon>
        <taxon>Metazoa</taxon>
        <taxon>Chordata</taxon>
        <taxon>Craniata</taxon>
        <taxon>Vertebrata</taxon>
        <taxon>Euteleostomi</taxon>
        <taxon>Mammalia</taxon>
        <taxon>Eutheria</taxon>
        <taxon>Euarchontoglires</taxon>
        <taxon>Primates</taxon>
        <taxon>Haplorrhini</taxon>
        <taxon>Catarrhini</taxon>
        <taxon>Hominidae</taxon>
        <taxon>Pan</taxon>
    </lineage>
</organism>
<evidence type="ECO:0000250" key="1">
    <source>
        <dbReference type="UniProtKB" id="P02654"/>
    </source>
</evidence>
<evidence type="ECO:0000250" key="2">
    <source>
        <dbReference type="UniProtKB" id="P86336"/>
    </source>
</evidence>
<evidence type="ECO:0000255" key="3"/>
<evidence type="ECO:0000269" key="4">
    <source>
    </source>
</evidence>
<evidence type="ECO:0000303" key="5">
    <source>
    </source>
</evidence>
<evidence type="ECO:0000305" key="6"/>
<name>APO1A_PANTR</name>
<sequence>MRLFLSLPVLVVVLSMVLEGPAPAQGAPEVSNPFDGLEELGKTLEDNTREFINRITQSELPAKMWDWFSETFRKVKEKLKIDS</sequence>
<comment type="subcellular location">
    <subcellularLocation>
        <location evidence="1">Secreted</location>
    </subcellularLocation>
</comment>
<comment type="mass spectrometry">
    <molecule>Apolipoprotein C-I, acidic form</molecule>
</comment>
<comment type="mass spectrometry">
    <molecule>Truncated apolipoprotein C-I, acidic form</molecule>
</comment>
<comment type="miscellaneous">
    <text evidence="5">Apolipoprotein C-I is present in acidic (APOC1A) and basic (APOC1B) forms in P.paniscus, P.abelii and P.troglodytes and perhaps also in baboons and macaques. The two genes for ApoC-I arose through a duplication process that occurred after the divergence of New World monkeys from the human lineage. In human, the acidic form has become a pseudogene sometime between the divergence of bonobos and chimpanzees from the human lineage and the appearance of the Denisovans. Pseudogenization resulted when the codon for the penultimate amino acid in the signal sequence was changed to a stop codon.</text>
</comment>
<comment type="similarity">
    <text evidence="6">Belongs to the apolipoprotein C1 family.</text>
</comment>
<accession>P0CE37</accession>
<gene>
    <name type="primary">APOC1A</name>
</gene>